<proteinExistence type="inferred from homology"/>
<reference key="1">
    <citation type="journal article" date="2002" name="Proc. Natl. Acad. Sci. U.S.A.">
        <title>Extensive mosaic structure revealed by the complete genome sequence of uropathogenic Escherichia coli.</title>
        <authorList>
            <person name="Welch R.A."/>
            <person name="Burland V."/>
            <person name="Plunkett G. III"/>
            <person name="Redford P."/>
            <person name="Roesch P."/>
            <person name="Rasko D."/>
            <person name="Buckles E.L."/>
            <person name="Liou S.-R."/>
            <person name="Boutin A."/>
            <person name="Hackett J."/>
            <person name="Stroud D."/>
            <person name="Mayhew G.F."/>
            <person name="Rose D.J."/>
            <person name="Zhou S."/>
            <person name="Schwartz D.C."/>
            <person name="Perna N.T."/>
            <person name="Mobley H.L.T."/>
            <person name="Donnenberg M.S."/>
            <person name="Blattner F.R."/>
        </authorList>
    </citation>
    <scope>NUCLEOTIDE SEQUENCE [LARGE SCALE GENOMIC DNA]</scope>
    <source>
        <strain>CFT073 / ATCC 700928 / UPEC</strain>
    </source>
</reference>
<feature type="chain" id="PRO_0000071804" description="UPF0225 protein YchJ">
    <location>
        <begin position="1"/>
        <end position="152"/>
    </location>
</feature>
<organism>
    <name type="scientific">Escherichia coli O6:H1 (strain CFT073 / ATCC 700928 / UPEC)</name>
    <dbReference type="NCBI Taxonomy" id="199310"/>
    <lineage>
        <taxon>Bacteria</taxon>
        <taxon>Pseudomonadati</taxon>
        <taxon>Pseudomonadota</taxon>
        <taxon>Gammaproteobacteria</taxon>
        <taxon>Enterobacterales</taxon>
        <taxon>Enterobacteriaceae</taxon>
        <taxon>Escherichia</taxon>
    </lineage>
</organism>
<sequence length="152" mass="16900">MSQLCPCGSAVEYSLCCHPYVSGEKVAPDPEHLMRSRYCAFVMQDADYLIKTWHPSCGAAALRAELIAGFAHTEWLGLTVFEHCWQDGGNIGFVSFVARFTEGGKTGAIIERSRFLKENGQWYYIDGTRPQFGRNDPCPCGSGKKFKKCCGQ</sequence>
<protein>
    <recommendedName>
        <fullName evidence="1">UPF0225 protein YchJ</fullName>
    </recommendedName>
</protein>
<accession>Q8FHX8</accession>
<keyword id="KW-1185">Reference proteome</keyword>
<gene>
    <name evidence="1" type="primary">ychJ</name>
    <name type="ordered locus">c1697</name>
</gene>
<evidence type="ECO:0000255" key="1">
    <source>
        <dbReference type="HAMAP-Rule" id="MF_00612"/>
    </source>
</evidence>
<evidence type="ECO:0000305" key="2"/>
<comment type="similarity">
    <text evidence="1">Belongs to the UPF0225 family.</text>
</comment>
<comment type="sequence caution" evidence="2">
    <conflict type="erroneous initiation">
        <sequence resource="EMBL-CDS" id="AAN80164"/>
    </conflict>
</comment>
<dbReference type="EMBL" id="AE014075">
    <property type="protein sequence ID" value="AAN80164.1"/>
    <property type="status" value="ALT_INIT"/>
    <property type="molecule type" value="Genomic_DNA"/>
</dbReference>
<dbReference type="RefSeq" id="WP_001362934.1">
    <property type="nucleotide sequence ID" value="NZ_CP051263.1"/>
</dbReference>
<dbReference type="SMR" id="Q8FHX8"/>
<dbReference type="STRING" id="199310.c1697"/>
<dbReference type="KEGG" id="ecc:c1697"/>
<dbReference type="eggNOG" id="COG3012">
    <property type="taxonomic scope" value="Bacteria"/>
</dbReference>
<dbReference type="HOGENOM" id="CLU_099590_0_0_6"/>
<dbReference type="Proteomes" id="UP000001410">
    <property type="component" value="Chromosome"/>
</dbReference>
<dbReference type="Gene3D" id="3.10.450.50">
    <property type="match status" value="1"/>
</dbReference>
<dbReference type="HAMAP" id="MF_00612">
    <property type="entry name" value="UPF0225"/>
    <property type="match status" value="1"/>
</dbReference>
<dbReference type="InterPro" id="IPR032710">
    <property type="entry name" value="NTF2-like_dom_sf"/>
</dbReference>
<dbReference type="InterPro" id="IPR004027">
    <property type="entry name" value="SEC_C_motif"/>
</dbReference>
<dbReference type="InterPro" id="IPR023006">
    <property type="entry name" value="UPF0225"/>
</dbReference>
<dbReference type="InterPro" id="IPR048469">
    <property type="entry name" value="YchJ-like_M"/>
</dbReference>
<dbReference type="NCBIfam" id="NF002449">
    <property type="entry name" value="PRK01617.1"/>
    <property type="match status" value="1"/>
</dbReference>
<dbReference type="NCBIfam" id="NF002486">
    <property type="entry name" value="PRK01752.1"/>
    <property type="match status" value="1"/>
</dbReference>
<dbReference type="PANTHER" id="PTHR33747:SF1">
    <property type="entry name" value="ADENYLATE CYCLASE-ASSOCIATED CAP C-TERMINAL DOMAIN-CONTAINING PROTEIN"/>
    <property type="match status" value="1"/>
</dbReference>
<dbReference type="PANTHER" id="PTHR33747">
    <property type="entry name" value="UPF0225 PROTEIN SCO1677"/>
    <property type="match status" value="1"/>
</dbReference>
<dbReference type="Pfam" id="PF02810">
    <property type="entry name" value="SEC-C"/>
    <property type="match status" value="2"/>
</dbReference>
<dbReference type="Pfam" id="PF17775">
    <property type="entry name" value="YchJ_M-like"/>
    <property type="match status" value="1"/>
</dbReference>
<dbReference type="SUPFAM" id="SSF54427">
    <property type="entry name" value="NTF2-like"/>
    <property type="match status" value="1"/>
</dbReference>
<dbReference type="SUPFAM" id="SSF103642">
    <property type="entry name" value="Sec-C motif"/>
    <property type="match status" value="1"/>
</dbReference>
<name>YCHJ_ECOL6</name>